<name>PSBL_HORVS</name>
<comment type="function">
    <text evidence="1">One of the components of the core complex of photosystem II (PSII). PSII is a light-driven water:plastoquinone oxidoreductase that uses light energy to abstract electrons from H(2)O, generating O(2) and a proton gradient subsequently used for ATP formation. It consists of a core antenna complex that captures photons, and an electron transfer chain that converts photonic excitation into a charge separation. This subunit is found at the monomer-monomer interface and is required for correct PSII assembly and/or dimerization.</text>
</comment>
<comment type="subunit">
    <text evidence="1">PSII is composed of 1 copy each of membrane proteins PsbA, PsbB, PsbC, PsbD, PsbE, PsbF, PsbH, PsbI, PsbJ, PsbK, PsbL, PsbM, PsbT, PsbX, PsbY, PsbZ, Psb30/Ycf12, at least 3 peripheral proteins of the oxygen-evolving complex and a large number of cofactors. It forms dimeric complexes.</text>
</comment>
<comment type="subcellular location">
    <subcellularLocation>
        <location evidence="1">Plastid</location>
        <location evidence="1">Chloroplast thylakoid membrane</location>
        <topology evidence="1">Single-pass membrane protein</topology>
    </subcellularLocation>
</comment>
<comment type="similarity">
    <text evidence="1">Belongs to the PsbL family.</text>
</comment>
<keyword id="KW-0150">Chloroplast</keyword>
<keyword id="KW-0472">Membrane</keyword>
<keyword id="KW-0602">Photosynthesis</keyword>
<keyword id="KW-0604">Photosystem II</keyword>
<keyword id="KW-0934">Plastid</keyword>
<keyword id="KW-0674">Reaction center</keyword>
<keyword id="KW-0793">Thylakoid</keyword>
<keyword id="KW-0812">Transmembrane</keyword>
<keyword id="KW-1133">Transmembrane helix</keyword>
<evidence type="ECO:0000255" key="1">
    <source>
        <dbReference type="HAMAP-Rule" id="MF_01317"/>
    </source>
</evidence>
<dbReference type="EMBL" id="AY309025">
    <property type="protein sequence ID" value="AAP70321.1"/>
    <property type="molecule type" value="Genomic_DNA"/>
</dbReference>
<dbReference type="RefSeq" id="YP_009649027.1">
    <property type="nucleotide sequence ID" value="NC_042692.1"/>
</dbReference>
<dbReference type="SMR" id="Q6W6Q9"/>
<dbReference type="GeneID" id="40486784"/>
<dbReference type="GO" id="GO:0009535">
    <property type="term" value="C:chloroplast thylakoid membrane"/>
    <property type="evidence" value="ECO:0007669"/>
    <property type="project" value="UniProtKB-SubCell"/>
</dbReference>
<dbReference type="GO" id="GO:0009539">
    <property type="term" value="C:photosystem II reaction center"/>
    <property type="evidence" value="ECO:0007669"/>
    <property type="project" value="InterPro"/>
</dbReference>
<dbReference type="GO" id="GO:0015979">
    <property type="term" value="P:photosynthesis"/>
    <property type="evidence" value="ECO:0007669"/>
    <property type="project" value="UniProtKB-UniRule"/>
</dbReference>
<dbReference type="HAMAP" id="MF_01317">
    <property type="entry name" value="PSII_PsbL"/>
    <property type="match status" value="1"/>
</dbReference>
<dbReference type="InterPro" id="IPR003372">
    <property type="entry name" value="PSII_PsbL"/>
</dbReference>
<dbReference type="InterPro" id="IPR037266">
    <property type="entry name" value="PSII_PsbL_sf"/>
</dbReference>
<dbReference type="NCBIfam" id="NF001972">
    <property type="entry name" value="PRK00753.1"/>
    <property type="match status" value="1"/>
</dbReference>
<dbReference type="Pfam" id="PF02419">
    <property type="entry name" value="PsbL"/>
    <property type="match status" value="1"/>
</dbReference>
<dbReference type="SUPFAM" id="SSF161017">
    <property type="entry name" value="Photosystem II reaction center protein L, PsbL"/>
    <property type="match status" value="1"/>
</dbReference>
<reference key="1">
    <citation type="submission" date="2003-05" db="EMBL/GenBank/DDBJ databases">
        <title>Chloroplast psbL and psbJ genes of Chinese Hordeum species.</title>
        <authorList>
            <person name="Wei Y.-M."/>
            <person name="Yan Z.-H."/>
            <person name="Wu W."/>
            <person name="Zhang Z.-Q."/>
            <person name="Zheng Y.-L."/>
        </authorList>
    </citation>
    <scope>NUCLEOTIDE SEQUENCE [GENOMIC DNA]</scope>
</reference>
<feature type="chain" id="PRO_0000219720" description="Photosystem II reaction center protein L">
    <location>
        <begin position="1"/>
        <end position="38"/>
    </location>
</feature>
<feature type="transmembrane region" description="Helical" evidence="1">
    <location>
        <begin position="17"/>
        <end position="37"/>
    </location>
</feature>
<accession>Q6W6Q9</accession>
<organism>
    <name type="scientific">Hordeum vulgare subsp. spontaneum</name>
    <name type="common">Wild barley</name>
    <name type="synonym">Hordeum spontaneum</name>
    <dbReference type="NCBI Taxonomy" id="77009"/>
    <lineage>
        <taxon>Eukaryota</taxon>
        <taxon>Viridiplantae</taxon>
        <taxon>Streptophyta</taxon>
        <taxon>Embryophyta</taxon>
        <taxon>Tracheophyta</taxon>
        <taxon>Spermatophyta</taxon>
        <taxon>Magnoliopsida</taxon>
        <taxon>Liliopsida</taxon>
        <taxon>Poales</taxon>
        <taxon>Poaceae</taxon>
        <taxon>BOP clade</taxon>
        <taxon>Pooideae</taxon>
        <taxon>Triticodae</taxon>
        <taxon>Triticeae</taxon>
        <taxon>Hordeinae</taxon>
        <taxon>Hordeum</taxon>
    </lineage>
</organism>
<protein>
    <recommendedName>
        <fullName evidence="1">Photosystem II reaction center protein L</fullName>
        <shortName evidence="1">PSII-L</shortName>
    </recommendedName>
</protein>
<geneLocation type="chloroplast"/>
<sequence>MTQSNPNEQNVELNRTSLYWGLLLIFVLAVLFSNYFFN</sequence>
<gene>
    <name evidence="1" type="primary">psbL</name>
</gene>
<proteinExistence type="inferred from homology"/>